<dbReference type="EMBL" id="CP000409">
    <property type="protein sequence ID" value="ABV73159.1"/>
    <property type="molecule type" value="Genomic_DNA"/>
</dbReference>
<dbReference type="RefSeq" id="WP_012148360.1">
    <property type="nucleotide sequence ID" value="NC_009879.1"/>
</dbReference>
<dbReference type="SMR" id="A8EXS6"/>
<dbReference type="STRING" id="293613.A1E_01055"/>
<dbReference type="KEGG" id="rcm:A1E_01055"/>
<dbReference type="eggNOG" id="COG0556">
    <property type="taxonomic scope" value="Bacteria"/>
</dbReference>
<dbReference type="HOGENOM" id="CLU_009621_2_1_5"/>
<dbReference type="Proteomes" id="UP000007056">
    <property type="component" value="Chromosome"/>
</dbReference>
<dbReference type="GO" id="GO:0005737">
    <property type="term" value="C:cytoplasm"/>
    <property type="evidence" value="ECO:0007669"/>
    <property type="project" value="UniProtKB-SubCell"/>
</dbReference>
<dbReference type="GO" id="GO:0009380">
    <property type="term" value="C:excinuclease repair complex"/>
    <property type="evidence" value="ECO:0007669"/>
    <property type="project" value="InterPro"/>
</dbReference>
<dbReference type="GO" id="GO:0005524">
    <property type="term" value="F:ATP binding"/>
    <property type="evidence" value="ECO:0007669"/>
    <property type="project" value="UniProtKB-UniRule"/>
</dbReference>
<dbReference type="GO" id="GO:0016887">
    <property type="term" value="F:ATP hydrolysis activity"/>
    <property type="evidence" value="ECO:0007669"/>
    <property type="project" value="InterPro"/>
</dbReference>
<dbReference type="GO" id="GO:0003677">
    <property type="term" value="F:DNA binding"/>
    <property type="evidence" value="ECO:0007669"/>
    <property type="project" value="UniProtKB-UniRule"/>
</dbReference>
<dbReference type="GO" id="GO:0009381">
    <property type="term" value="F:excinuclease ABC activity"/>
    <property type="evidence" value="ECO:0007669"/>
    <property type="project" value="UniProtKB-UniRule"/>
</dbReference>
<dbReference type="GO" id="GO:0004386">
    <property type="term" value="F:helicase activity"/>
    <property type="evidence" value="ECO:0007669"/>
    <property type="project" value="UniProtKB-KW"/>
</dbReference>
<dbReference type="GO" id="GO:0006289">
    <property type="term" value="P:nucleotide-excision repair"/>
    <property type="evidence" value="ECO:0007669"/>
    <property type="project" value="UniProtKB-UniRule"/>
</dbReference>
<dbReference type="GO" id="GO:0009432">
    <property type="term" value="P:SOS response"/>
    <property type="evidence" value="ECO:0007669"/>
    <property type="project" value="UniProtKB-UniRule"/>
</dbReference>
<dbReference type="CDD" id="cd17916">
    <property type="entry name" value="DEXHc_UvrB"/>
    <property type="match status" value="1"/>
</dbReference>
<dbReference type="CDD" id="cd18790">
    <property type="entry name" value="SF2_C_UvrB"/>
    <property type="match status" value="1"/>
</dbReference>
<dbReference type="Gene3D" id="3.40.50.300">
    <property type="entry name" value="P-loop containing nucleotide triphosphate hydrolases"/>
    <property type="match status" value="3"/>
</dbReference>
<dbReference type="Gene3D" id="4.10.860.10">
    <property type="entry name" value="UVR domain"/>
    <property type="match status" value="1"/>
</dbReference>
<dbReference type="HAMAP" id="MF_00204">
    <property type="entry name" value="UvrB"/>
    <property type="match status" value="1"/>
</dbReference>
<dbReference type="InterPro" id="IPR006935">
    <property type="entry name" value="Helicase/UvrB_N"/>
</dbReference>
<dbReference type="InterPro" id="IPR014001">
    <property type="entry name" value="Helicase_ATP-bd"/>
</dbReference>
<dbReference type="InterPro" id="IPR001650">
    <property type="entry name" value="Helicase_C-like"/>
</dbReference>
<dbReference type="InterPro" id="IPR027417">
    <property type="entry name" value="P-loop_NTPase"/>
</dbReference>
<dbReference type="InterPro" id="IPR001943">
    <property type="entry name" value="UVR_dom"/>
</dbReference>
<dbReference type="InterPro" id="IPR036876">
    <property type="entry name" value="UVR_dom_sf"/>
</dbReference>
<dbReference type="InterPro" id="IPR004807">
    <property type="entry name" value="UvrB"/>
</dbReference>
<dbReference type="InterPro" id="IPR041471">
    <property type="entry name" value="UvrB_inter"/>
</dbReference>
<dbReference type="InterPro" id="IPR024759">
    <property type="entry name" value="UvrB_YAD/RRR_dom"/>
</dbReference>
<dbReference type="NCBIfam" id="NF003673">
    <property type="entry name" value="PRK05298.1"/>
    <property type="match status" value="1"/>
</dbReference>
<dbReference type="NCBIfam" id="TIGR00631">
    <property type="entry name" value="uvrb"/>
    <property type="match status" value="1"/>
</dbReference>
<dbReference type="PANTHER" id="PTHR24029">
    <property type="entry name" value="UVRABC SYSTEM PROTEIN B"/>
    <property type="match status" value="1"/>
</dbReference>
<dbReference type="PANTHER" id="PTHR24029:SF0">
    <property type="entry name" value="UVRABC SYSTEM PROTEIN B"/>
    <property type="match status" value="1"/>
</dbReference>
<dbReference type="Pfam" id="PF00271">
    <property type="entry name" value="Helicase_C"/>
    <property type="match status" value="1"/>
</dbReference>
<dbReference type="Pfam" id="PF04851">
    <property type="entry name" value="ResIII"/>
    <property type="match status" value="1"/>
</dbReference>
<dbReference type="Pfam" id="PF02151">
    <property type="entry name" value="UVR"/>
    <property type="match status" value="1"/>
</dbReference>
<dbReference type="Pfam" id="PF12344">
    <property type="entry name" value="UvrB"/>
    <property type="match status" value="1"/>
</dbReference>
<dbReference type="Pfam" id="PF17757">
    <property type="entry name" value="UvrB_inter"/>
    <property type="match status" value="1"/>
</dbReference>
<dbReference type="SMART" id="SM00487">
    <property type="entry name" value="DEXDc"/>
    <property type="match status" value="1"/>
</dbReference>
<dbReference type="SMART" id="SM00490">
    <property type="entry name" value="HELICc"/>
    <property type="match status" value="1"/>
</dbReference>
<dbReference type="SUPFAM" id="SSF46600">
    <property type="entry name" value="C-terminal UvrC-binding domain of UvrB"/>
    <property type="match status" value="1"/>
</dbReference>
<dbReference type="SUPFAM" id="SSF52540">
    <property type="entry name" value="P-loop containing nucleoside triphosphate hydrolases"/>
    <property type="match status" value="2"/>
</dbReference>
<dbReference type="PROSITE" id="PS51192">
    <property type="entry name" value="HELICASE_ATP_BIND_1"/>
    <property type="match status" value="1"/>
</dbReference>
<dbReference type="PROSITE" id="PS51194">
    <property type="entry name" value="HELICASE_CTER"/>
    <property type="match status" value="1"/>
</dbReference>
<dbReference type="PROSITE" id="PS50151">
    <property type="entry name" value="UVR"/>
    <property type="match status" value="1"/>
</dbReference>
<feature type="chain" id="PRO_1000077915" description="UvrABC system protein B">
    <location>
        <begin position="1"/>
        <end position="661"/>
    </location>
</feature>
<feature type="domain" description="Helicase ATP-binding" evidence="1">
    <location>
        <begin position="25"/>
        <end position="182"/>
    </location>
</feature>
<feature type="domain" description="Helicase C-terminal" evidence="1">
    <location>
        <begin position="430"/>
        <end position="592"/>
    </location>
</feature>
<feature type="domain" description="UVR" evidence="1">
    <location>
        <begin position="621"/>
        <end position="656"/>
    </location>
</feature>
<feature type="short sequence motif" description="Beta-hairpin">
    <location>
        <begin position="91"/>
        <end position="114"/>
    </location>
</feature>
<feature type="binding site" evidence="1">
    <location>
        <begin position="38"/>
        <end position="45"/>
    </location>
    <ligand>
        <name>ATP</name>
        <dbReference type="ChEBI" id="CHEBI:30616"/>
    </ligand>
</feature>
<reference key="1">
    <citation type="submission" date="2007-09" db="EMBL/GenBank/DDBJ databases">
        <title>Complete genome sequence of Rickettsia canadensis.</title>
        <authorList>
            <person name="Madan A."/>
            <person name="Fahey J."/>
            <person name="Helton E."/>
            <person name="Ketteman M."/>
            <person name="Madan A."/>
            <person name="Rodrigues S."/>
            <person name="Sanchez A."/>
            <person name="Whiting M."/>
            <person name="Dasch G."/>
            <person name="Eremeeva M."/>
        </authorList>
    </citation>
    <scope>NUCLEOTIDE SEQUENCE [LARGE SCALE GENOMIC DNA]</scope>
    <source>
        <strain>McKiel</strain>
    </source>
</reference>
<protein>
    <recommendedName>
        <fullName evidence="1">UvrABC system protein B</fullName>
        <shortName evidence="1">Protein UvrB</shortName>
    </recommendedName>
    <alternativeName>
        <fullName evidence="1">Excinuclease ABC subunit B</fullName>
    </alternativeName>
</protein>
<organism>
    <name type="scientific">Rickettsia canadensis (strain McKiel)</name>
    <dbReference type="NCBI Taxonomy" id="293613"/>
    <lineage>
        <taxon>Bacteria</taxon>
        <taxon>Pseudomonadati</taxon>
        <taxon>Pseudomonadota</taxon>
        <taxon>Alphaproteobacteria</taxon>
        <taxon>Rickettsiales</taxon>
        <taxon>Rickettsiaceae</taxon>
        <taxon>Rickettsieae</taxon>
        <taxon>Rickettsia</taxon>
        <taxon>belli group</taxon>
    </lineage>
</organism>
<proteinExistence type="inferred from homology"/>
<evidence type="ECO:0000255" key="1">
    <source>
        <dbReference type="HAMAP-Rule" id="MF_00204"/>
    </source>
</evidence>
<keyword id="KW-0067">ATP-binding</keyword>
<keyword id="KW-0963">Cytoplasm</keyword>
<keyword id="KW-0227">DNA damage</keyword>
<keyword id="KW-0228">DNA excision</keyword>
<keyword id="KW-0234">DNA repair</keyword>
<keyword id="KW-0267">Excision nuclease</keyword>
<keyword id="KW-0347">Helicase</keyword>
<keyword id="KW-0378">Hydrolase</keyword>
<keyword id="KW-0547">Nucleotide-binding</keyword>
<keyword id="KW-0742">SOS response</keyword>
<gene>
    <name evidence="1" type="primary">uvrB</name>
    <name type="ordered locus">A1E_01055</name>
</gene>
<accession>A8EXS6</accession>
<name>UVRB_RICCK</name>
<sequence>MNNFSIISEYKPAGDQPKAIDEIIAGLNSKKRSQMLLGITGSGKTFTMANIIARMNRPTLIMAHNKTLAAQIYSEMKLMFPKNAIEYFVSYYDYYQPEAYIARTDTFIEKDSSINEQIDLMRHSATRSLLERRDVIVVSSVSCIYGLGSPNLYYQMTVNLESGKSYPRDKLLSDLVNLQYERNDIGFERGCFRVKGDNIDIFPSHYSDKAWRLSFVGNELEYIHEFDPLTGTKLAKLDKAMVFGNSHFVIPQETVNKAISEIEVELQKRLELLKSQNKILETQRLNQRTQYDLEMLTTTGSCKGIENYSRFLTGRNAGEPPPTLFEYLPKDALLFVDESHVSVPQIRAMYNGDRARKKVLVEHGFRLPSALDNRPLKFEEWEKFRPQTIFVSATPGPFELEETGGLVVELIIRPTGLLDPECIIKPATNQVEDLISEIQTTIAKGLRVLVTTLTKKMAEDLTTYLQELKYKSSYLHSNVHTLERLEILRDLRQGTINILVGINLLREGLDIPECGLVAILDADKEGFLRSEVSLIQTIGRAARNSEGRVILYADKITKSIDKAVSETMRRRQIQQEYNEKHGIIPQTINRTIYALTALKKIDSKLDKKQAHILFDNPAKLKAHIYKLKKAMLKAASNLEFEQATKLRDQLKNLEEAALELS</sequence>
<comment type="function">
    <text evidence="1">The UvrABC repair system catalyzes the recognition and processing of DNA lesions. A damage recognition complex composed of 2 UvrA and 2 UvrB subunits scans DNA for abnormalities. Upon binding of the UvrA(2)B(2) complex to a putative damaged site, the DNA wraps around one UvrB monomer. DNA wrap is dependent on ATP binding by UvrB and probably causes local melting of the DNA helix, facilitating insertion of UvrB beta-hairpin between the DNA strands. Then UvrB probes one DNA strand for the presence of a lesion. If a lesion is found the UvrA subunits dissociate and the UvrB-DNA preincision complex is formed. This complex is subsequently bound by UvrC and the second UvrB is released. If no lesion is found, the DNA wraps around the other UvrB subunit that will check the other stand for damage.</text>
</comment>
<comment type="subunit">
    <text evidence="1">Forms a heterotetramer with UvrA during the search for lesions. Interacts with UvrC in an incision complex.</text>
</comment>
<comment type="subcellular location">
    <subcellularLocation>
        <location evidence="1">Cytoplasm</location>
    </subcellularLocation>
</comment>
<comment type="domain">
    <text evidence="1">The beta-hairpin motif is involved in DNA binding.</text>
</comment>
<comment type="similarity">
    <text evidence="1">Belongs to the UvrB family.</text>
</comment>